<reference key="1">
    <citation type="journal article" date="2008" name="PLoS Genet.">
        <title>Genomic islands in the pathogenic filamentous fungus Aspergillus fumigatus.</title>
        <authorList>
            <person name="Fedorova N.D."/>
            <person name="Khaldi N."/>
            <person name="Joardar V.S."/>
            <person name="Maiti R."/>
            <person name="Amedeo P."/>
            <person name="Anderson M.J."/>
            <person name="Crabtree J."/>
            <person name="Silva J.C."/>
            <person name="Badger J.H."/>
            <person name="Albarraq A."/>
            <person name="Angiuoli S."/>
            <person name="Bussey H."/>
            <person name="Bowyer P."/>
            <person name="Cotty P.J."/>
            <person name="Dyer P.S."/>
            <person name="Egan A."/>
            <person name="Galens K."/>
            <person name="Fraser-Liggett C.M."/>
            <person name="Haas B.J."/>
            <person name="Inman J.M."/>
            <person name="Kent R."/>
            <person name="Lemieux S."/>
            <person name="Malavazi I."/>
            <person name="Orvis J."/>
            <person name="Roemer T."/>
            <person name="Ronning C.M."/>
            <person name="Sundaram J.P."/>
            <person name="Sutton G."/>
            <person name="Turner G."/>
            <person name="Venter J.C."/>
            <person name="White O.R."/>
            <person name="Whitty B.R."/>
            <person name="Youngman P."/>
            <person name="Wolfe K.H."/>
            <person name="Goldman G.H."/>
            <person name="Wortman J.R."/>
            <person name="Jiang B."/>
            <person name="Denning D.W."/>
            <person name="Nierman W.C."/>
        </authorList>
    </citation>
    <scope>NUCLEOTIDE SEQUENCE [LARGE SCALE GENOMIC DNA]</scope>
    <source>
        <strain>ATCC 1007 / CBS 513.65 / DSM 816 / NCTC 3887 / NRRL 1 / QM 1276 / 107</strain>
    </source>
</reference>
<comment type="function">
    <text evidence="1">Involved in the biogenesis of the 60S ribosomal subunit. May play a part in the quality control of pre-60S particles (By similarity).</text>
</comment>
<comment type="subunit">
    <text evidence="2">Component of the pre-66S ribosomal particle. Interacts with nop7 and rrp1. Interacts with rsa4 (via WD repeats).</text>
</comment>
<comment type="subcellular location">
    <subcellularLocation>
        <location evidence="1">Nucleus</location>
        <location evidence="1">Nucleolus</location>
    </subcellularLocation>
</comment>
<comment type="similarity">
    <text evidence="5">Belongs to the eukaryotic ribosomal protein eS8 family. Ribosome biogenesis protein NSA2 subfamily.</text>
</comment>
<proteinExistence type="inferred from homology"/>
<keyword id="KW-0539">Nucleus</keyword>
<keyword id="KW-1185">Reference proteome</keyword>
<keyword id="KW-0687">Ribonucleoprotein</keyword>
<keyword id="KW-0690">Ribosome biogenesis</keyword>
<keyword id="KW-0698">rRNA processing</keyword>
<gene>
    <name type="primary">nsa2</name>
    <name type="ORF">ACLA_036050</name>
</gene>
<sequence>MRLPQLKIQYIERWQKQHGKRLDHDERVRKRQAREGHKQSQDAQNLRGLRAKLYQQKRHKEKIQMRKRIKAQEEKNVKSSAPDEPSKTPLPQYLLDRSQATNAKALSSAIKDKRAEKAAKFAVPLPKVKGISEEEMFKVVDTGKKTHKKSWKRMITKPTFVGSDFTRRPVKYERFIRPMGLRYKKANVTHPELGVTVQLPILGVKKNPQNPLYTQLGVLTKGTIIEVNVSELGIVTTSGKVVWGKYAQITNTPENDGTVNAVLLV</sequence>
<name>NSA2_ASPCL</name>
<feature type="chain" id="PRO_0000320409" description="Ribosome biogenesis protein nsa2">
    <location>
        <begin position="1"/>
        <end position="265"/>
    </location>
</feature>
<feature type="region of interest" description="Disordered" evidence="4">
    <location>
        <begin position="17"/>
        <end position="91"/>
    </location>
</feature>
<feature type="short sequence motif" description="Nuclear localization signal 1" evidence="3">
    <location>
        <begin position="19"/>
        <end position="26"/>
    </location>
</feature>
<feature type="short sequence motif" description="Nuclear localization signal 2" evidence="3">
    <location>
        <begin position="56"/>
        <end position="63"/>
    </location>
</feature>
<feature type="compositionally biased region" description="Basic and acidic residues" evidence="4">
    <location>
        <begin position="20"/>
        <end position="40"/>
    </location>
</feature>
<feature type="compositionally biased region" description="Basic residues" evidence="4">
    <location>
        <begin position="55"/>
        <end position="69"/>
    </location>
</feature>
<dbReference type="EMBL" id="DS027056">
    <property type="protein sequence ID" value="EAW09402.1"/>
    <property type="molecule type" value="Genomic_DNA"/>
</dbReference>
<dbReference type="RefSeq" id="XP_001270828.1">
    <property type="nucleotide sequence ID" value="XM_001270827.1"/>
</dbReference>
<dbReference type="SMR" id="A1CJS8"/>
<dbReference type="STRING" id="344612.A1CJS8"/>
<dbReference type="EnsemblFungi" id="EAW09402">
    <property type="protein sequence ID" value="EAW09402"/>
    <property type="gene ID" value="ACLA_036050"/>
</dbReference>
<dbReference type="GeneID" id="4703401"/>
<dbReference type="KEGG" id="act:ACLA_036050"/>
<dbReference type="VEuPathDB" id="FungiDB:ACLA_036050"/>
<dbReference type="eggNOG" id="KOG3163">
    <property type="taxonomic scope" value="Eukaryota"/>
</dbReference>
<dbReference type="HOGENOM" id="CLU_1070048_0_0_1"/>
<dbReference type="OMA" id="TNTPEND"/>
<dbReference type="OrthoDB" id="1847590at2759"/>
<dbReference type="Proteomes" id="UP000006701">
    <property type="component" value="Unassembled WGS sequence"/>
</dbReference>
<dbReference type="GO" id="GO:0005730">
    <property type="term" value="C:nucleolus"/>
    <property type="evidence" value="ECO:0007669"/>
    <property type="project" value="UniProtKB-SubCell"/>
</dbReference>
<dbReference type="GO" id="GO:0030687">
    <property type="term" value="C:preribosome, large subunit precursor"/>
    <property type="evidence" value="ECO:0007669"/>
    <property type="project" value="EnsemblFungi"/>
</dbReference>
<dbReference type="GO" id="GO:0000466">
    <property type="term" value="P:maturation of 5.8S rRNA from tricistronic rRNA transcript (SSU-rRNA, 5.8S rRNA, LSU-rRNA)"/>
    <property type="evidence" value="ECO:0007669"/>
    <property type="project" value="EnsemblFungi"/>
</dbReference>
<dbReference type="GO" id="GO:0000463">
    <property type="term" value="P:maturation of LSU-rRNA from tricistronic rRNA transcript (SSU-rRNA, 5.8S rRNA, LSU-rRNA)"/>
    <property type="evidence" value="ECO:0007669"/>
    <property type="project" value="EnsemblFungi"/>
</dbReference>
<dbReference type="CDD" id="cd11381">
    <property type="entry name" value="NSA2"/>
    <property type="match status" value="1"/>
</dbReference>
<dbReference type="FunFam" id="2.40.10.310:FF:000001">
    <property type="entry name" value="NSA2, ribosome biogenesis homolog"/>
    <property type="match status" value="1"/>
</dbReference>
<dbReference type="Gene3D" id="2.40.10.310">
    <property type="match status" value="1"/>
</dbReference>
<dbReference type="InterPro" id="IPR039411">
    <property type="entry name" value="NSA2_fam"/>
</dbReference>
<dbReference type="InterPro" id="IPR022309">
    <property type="entry name" value="Ribosomal_Se8/biogenesis_NSA2"/>
</dbReference>
<dbReference type="PANTHER" id="PTHR12642">
    <property type="entry name" value="RIBOSOME BIOGENESIS PROTEIN NSA2 HOMOLOG"/>
    <property type="match status" value="1"/>
</dbReference>
<dbReference type="Pfam" id="PF01201">
    <property type="entry name" value="Ribosomal_S8e"/>
    <property type="match status" value="1"/>
</dbReference>
<evidence type="ECO:0000250" key="1"/>
<evidence type="ECO:0000250" key="2">
    <source>
        <dbReference type="UniProtKB" id="P40078"/>
    </source>
</evidence>
<evidence type="ECO:0000255" key="3">
    <source>
        <dbReference type="PROSITE-ProRule" id="PRU00768"/>
    </source>
</evidence>
<evidence type="ECO:0000256" key="4">
    <source>
        <dbReference type="SAM" id="MobiDB-lite"/>
    </source>
</evidence>
<evidence type="ECO:0000305" key="5"/>
<protein>
    <recommendedName>
        <fullName>Ribosome biogenesis protein nsa2</fullName>
    </recommendedName>
</protein>
<accession>A1CJS8</accession>
<organism>
    <name type="scientific">Aspergillus clavatus (strain ATCC 1007 / CBS 513.65 / DSM 816 / NCTC 3887 / NRRL 1 / QM 1276 / 107)</name>
    <dbReference type="NCBI Taxonomy" id="344612"/>
    <lineage>
        <taxon>Eukaryota</taxon>
        <taxon>Fungi</taxon>
        <taxon>Dikarya</taxon>
        <taxon>Ascomycota</taxon>
        <taxon>Pezizomycotina</taxon>
        <taxon>Eurotiomycetes</taxon>
        <taxon>Eurotiomycetidae</taxon>
        <taxon>Eurotiales</taxon>
        <taxon>Aspergillaceae</taxon>
        <taxon>Aspergillus</taxon>
        <taxon>Aspergillus subgen. Fumigati</taxon>
    </lineage>
</organism>